<proteinExistence type="evidence at protein level"/>
<accession>Q5A1B0</accession>
<accession>Q96W98</accession>
<evidence type="ECO:0000250" key="1">
    <source>
        <dbReference type="UniProtKB" id="A0A059TC02"/>
    </source>
</evidence>
<evidence type="ECO:0000250" key="2">
    <source>
        <dbReference type="UniProtKB" id="P51110"/>
    </source>
</evidence>
<evidence type="ECO:0000250" key="3">
    <source>
        <dbReference type="UniProtKB" id="P53199"/>
    </source>
</evidence>
<evidence type="ECO:0000250" key="4">
    <source>
        <dbReference type="UniProtKB" id="Q12068"/>
    </source>
</evidence>
<evidence type="ECO:0000269" key="5">
    <source>
    </source>
</evidence>
<evidence type="ECO:0000269" key="6">
    <source>
    </source>
</evidence>
<evidence type="ECO:0000269" key="7">
    <source>
    </source>
</evidence>
<evidence type="ECO:0000303" key="8">
    <source>
    </source>
</evidence>
<evidence type="ECO:0000305" key="9"/>
<sequence length="350" mass="39184">MSESLQSVLIIGGSGFLGLHLIEQFYRHCPNVAITVFDVRPLPEKLSKYFTFDPSKIQFFKGDLTSDKDVSDAINQSKCDVIVHSASPMHGLPQEIYEKVNVQGTKNLLSVAQKLHVKALVYTSSAGVIFNGQDVINADETWPYPEVHMDGYNETKAAAEEAVMKANDNDQLRTVCLRPAGIFGPGDRQLVPGLRASAKLGQSKYQLGDNNNLFDWTYVGNVADAHVLAAQKILDKSTRDDISGQTFFITNDSPTYFWTLARTVWKNDGYIDKYYIKLPYPVALTLGYISEFVAKNILKKEPGITPFRVKVVCAIRYHNIAKAKKLLGYKPEVDLETGINYTLDWMNEDL</sequence>
<comment type="function">
    <text evidence="5 9">Sterol-4-alpha-carboxylate 3-dehydrogenase; part of the third module of ergosterol biosynthesis pathway that includes the late steps of the pathway (PubMed:12702354). ERG26 is a catalytic component of the C-4 demethylation complex that catalyzes the oxidative decarboxylation that results in a reduction of the 3-beta-hydroxy group at the C-3 carbon to an oxo group (PubMed:12702354). The third module or late pathway involves the ergosterol synthesis itself through consecutive reactions that mainly occur in the endoplasmic reticulum (ER) membrane. Firstly, the squalene synthase ERG9 catalyzes the condensation of 2 farnesyl pyrophosphate moieties to form squalene, which is the precursor of all steroids. Squalene synthase is crucial for balancing the incorporation of farnesyl diphosphate (FPP) into sterol and nonsterol isoprene synthesis. Secondly, the squalene epoxidase ERG1 catalyzes the stereospecific oxidation of squalene to (S)-2,3-epoxysqualene, which is considered to be a rate-limiting enzyme in steroid biosynthesis. Then, the lanosterol synthase ERG7 catalyzes the cyclization of (S)-2,3 oxidosqualene to lanosterol, a reaction that forms the sterol core. In the next steps, lanosterol is transformed to zymosterol through a complex process involving various demethylation, reduction and desaturation reactions. The lanosterol 14-alpha-demethylase ERG11 (also known as CYP51) catalyzes C14-demethylation of lanosterol to produce 4,4'-dimethyl cholesta-8,14,24-triene-3-beta-ol, which is critical for ergosterol biosynthesis. The C-14 reductase ERG24 reduces the C14=C15 double bond of 4,4-dimethyl-cholesta-8,14,24-trienol to produce 4,4-dimethyl-cholesta-8,24-dienol. 4,4-dimethyl-cholesta-8,24-dienol is substrate of the C-4 demethylation complex ERG25-ERG26-ERG27 in which ERG25 catalyzes the three-step monooxygenation required for the demethylation of 4,4-dimethyl and 4alpha-methylsterols, ERG26 catalyzes the oxidative decarboxylation that results in a reduction of the 3-beta-hydroxy group at the C-3 carbon to an oxo group, and ERG27 is responsible for the reduction of the keto group on the C-3. ERG28 has a role as a scaffold to help anchor ERG25, ERG26 and ERG27 to the endoplasmic reticulum and ERG29 regulates the activity of the iron-containing C4-methylsterol oxidase ERG25. Then, the sterol 24-C-methyltransferase ERG6 catalyzes the methyl transfer from S-adenosyl-methionine to the C-24 of zymosterol to form fecosterol. The C-8 sterol isomerase ERG2 catalyzes the reaction which results in unsaturation at C-7 in the B ring of sterols and thus converts fecosterol to episterol. The sterol-C5-desaturase ERG3 then catalyzes the introduction of a C-5 double bond in the B ring to produce 5-dehydroepisterol. The C-22 sterol desaturase ERG5 further converts 5-dehydroepisterol into ergosta-5,7,22,24(28)-tetraen-3beta-ol by forming the C-22(23) double bond in the sterol side chain. Finally, ergosta-5,7,22,24(28)-tetraen-3beta-ol is substrate of the C-24(28) sterol reductase ERG4 to produce ergosterol (Probable).</text>
</comment>
<comment type="catalytic activity">
    <reaction evidence="5">
        <text>4beta-methylzymosterol-4alpha-carboxylate + NADP(+) = 3-dehydro-4-methylzymosterol + CO2 + NADPH</text>
        <dbReference type="Rhea" id="RHEA:33447"/>
        <dbReference type="ChEBI" id="CHEBI:16526"/>
        <dbReference type="ChEBI" id="CHEBI:50593"/>
        <dbReference type="ChEBI" id="CHEBI:57783"/>
        <dbReference type="ChEBI" id="CHEBI:58349"/>
        <dbReference type="ChEBI" id="CHEBI:64925"/>
        <dbReference type="EC" id="1.1.1.170"/>
    </reaction>
    <physiologicalReaction direction="left-to-right" evidence="5">
        <dbReference type="Rhea" id="RHEA:33448"/>
    </physiologicalReaction>
</comment>
<comment type="pathway">
    <text evidence="5">Steroid biosynthesis; zymosterol biosynthesis; zymosterol from lanosterol: step 4/6.</text>
</comment>
<comment type="subunit">
    <text evidence="3">Heterotetramer of ERG25, ERG26, ERG27 and ERG28 (By similarity). ERG28 acts as a scaffold to tether ERG27 and other 4,4-demethylation-related enzymes, forming a demethylation enzyme complex, in the endoplasmic reticulum (By similarity).</text>
</comment>
<comment type="subcellular location">
    <subcellularLocation>
        <location evidence="3">Endoplasmic reticulum membrane</location>
        <topology evidence="3">Peripheral membrane protein</topology>
    </subcellularLocation>
</comment>
<comment type="induction">
    <text evidence="6 7">Expression is repressed by amphotericin B and caspofungin (PubMed:15917516). Expression is also repressed during biofilm formation (PubMed:22265407).</text>
</comment>
<comment type="disruption phenotype">
    <text evidence="5">Impairs growth.</text>
</comment>
<comment type="similarity">
    <text evidence="9">Belongs to the 3-beta-HSD family.</text>
</comment>
<feature type="chain" id="PRO_0000454175" description="Sterol-4-alpha-carboxylate 3-dehydrogenase ERG26, decarboxylating">
    <location>
        <begin position="1"/>
        <end position="350"/>
    </location>
</feature>
<feature type="active site" description="Proton donor" evidence="4">
    <location>
        <position position="156"/>
    </location>
</feature>
<feature type="binding site" evidence="2">
    <location>
        <begin position="12"/>
        <end position="18"/>
    </location>
    <ligand>
        <name>NADP(+)</name>
        <dbReference type="ChEBI" id="CHEBI:58349"/>
    </ligand>
</feature>
<feature type="binding site" evidence="2">
    <location>
        <begin position="63"/>
        <end position="64"/>
    </location>
    <ligand>
        <name>NADP(+)</name>
        <dbReference type="ChEBI" id="CHEBI:58349"/>
    </ligand>
</feature>
<feature type="binding site" evidence="2">
    <location>
        <begin position="85"/>
        <end position="87"/>
    </location>
    <ligand>
        <name>NADP(+)</name>
        <dbReference type="ChEBI" id="CHEBI:58349"/>
    </ligand>
</feature>
<feature type="binding site" evidence="2">
    <location>
        <position position="125"/>
    </location>
    <ligand>
        <name>substrate</name>
    </ligand>
</feature>
<feature type="binding site" evidence="1">
    <location>
        <position position="152"/>
    </location>
    <ligand>
        <name>NADP(+)</name>
        <dbReference type="ChEBI" id="CHEBI:58349"/>
    </ligand>
</feature>
<feature type="binding site" evidence="2">
    <location>
        <position position="152"/>
    </location>
    <ligand>
        <name>substrate</name>
    </ligand>
</feature>
<feature type="binding site" evidence="2">
    <location>
        <position position="156"/>
    </location>
    <ligand>
        <name>NADP(+)</name>
        <dbReference type="ChEBI" id="CHEBI:58349"/>
    </ligand>
</feature>
<feature type="binding site" evidence="2">
    <location>
        <begin position="179"/>
        <end position="182"/>
    </location>
    <ligand>
        <name>NADP(+)</name>
        <dbReference type="ChEBI" id="CHEBI:58349"/>
    </ligand>
</feature>
<name>ERG26_CANAL</name>
<keyword id="KW-0256">Endoplasmic reticulum</keyword>
<keyword id="KW-0444">Lipid biosynthesis</keyword>
<keyword id="KW-0443">Lipid metabolism</keyword>
<keyword id="KW-0472">Membrane</keyword>
<keyword id="KW-0520">NAD</keyword>
<keyword id="KW-0521">NADP</keyword>
<keyword id="KW-0560">Oxidoreductase</keyword>
<keyword id="KW-1185">Reference proteome</keyword>
<keyword id="KW-0752">Steroid biosynthesis</keyword>
<keyword id="KW-0753">Steroid metabolism</keyword>
<keyword id="KW-0756">Sterol biosynthesis</keyword>
<keyword id="KW-1207">Sterol metabolism</keyword>
<reference key="1">
    <citation type="journal article" date="2004" name="Proc. Natl. Acad. Sci. U.S.A.">
        <title>The diploid genome sequence of Candida albicans.</title>
        <authorList>
            <person name="Jones T."/>
            <person name="Federspiel N.A."/>
            <person name="Chibana H."/>
            <person name="Dungan J."/>
            <person name="Kalman S."/>
            <person name="Magee B.B."/>
            <person name="Newport G."/>
            <person name="Thorstenson Y.R."/>
            <person name="Agabian N."/>
            <person name="Magee P.T."/>
            <person name="Davis R.W."/>
            <person name="Scherer S."/>
        </authorList>
    </citation>
    <scope>NUCLEOTIDE SEQUENCE [LARGE SCALE GENOMIC DNA]</scope>
    <source>
        <strain>SC5314 / ATCC MYA-2876</strain>
    </source>
</reference>
<reference key="2">
    <citation type="journal article" date="2007" name="Genome Biol.">
        <title>Assembly of the Candida albicans genome into sixteen supercontigs aligned on the eight chromosomes.</title>
        <authorList>
            <person name="van het Hoog M."/>
            <person name="Rast T.J."/>
            <person name="Martchenko M."/>
            <person name="Grindle S."/>
            <person name="Dignard D."/>
            <person name="Hogues H."/>
            <person name="Cuomo C."/>
            <person name="Berriman M."/>
            <person name="Scherer S."/>
            <person name="Magee B.B."/>
            <person name="Whiteway M."/>
            <person name="Chibana H."/>
            <person name="Nantel A."/>
            <person name="Magee P.T."/>
        </authorList>
    </citation>
    <scope>GENOME REANNOTATION</scope>
    <source>
        <strain>SC5314 / ATCC MYA-2876</strain>
    </source>
</reference>
<reference key="3">
    <citation type="journal article" date="2013" name="Genome Biol.">
        <title>Assembly of a phased diploid Candida albicans genome facilitates allele-specific measurements and provides a simple model for repeat and indel structure.</title>
        <authorList>
            <person name="Muzzey D."/>
            <person name="Schwartz K."/>
            <person name="Weissman J.S."/>
            <person name="Sherlock G."/>
        </authorList>
    </citation>
    <scope>NUCLEOTIDE SEQUENCE [LARGE SCALE GENOMIC DNA]</scope>
    <scope>GENOME REANNOTATION</scope>
    <source>
        <strain>SC5314 / ATCC MYA-2876</strain>
    </source>
</reference>
<reference key="4">
    <citation type="journal article" date="2001" name="FEMS Yeast Res.">
        <title>The Candida albicans ERG26 gene encoding the C-3 sterol dehydrogenase (C-4 decarboxylase) is essential for growth.</title>
        <authorList>
            <person name="Aaron K.E."/>
            <person name="Pierson C.A."/>
            <person name="Lees N.D."/>
            <person name="Bard M."/>
        </authorList>
    </citation>
    <scope>FUNCTION</scope>
    <scope>CATALYTIC ACTIVITY</scope>
    <scope>DISRUPTION PHENOTYPE</scope>
    <scope>PATHWAY</scope>
</reference>
<reference key="5">
    <citation type="journal article" date="2005" name="Antimicrob. Agents Chemother.">
        <title>Genome-wide expression profiling of the response to azole, polyene, echinocandin, and pyrimidine antifungal agents in Candida albicans.</title>
        <authorList>
            <person name="Liu T.T."/>
            <person name="Lee R.E."/>
            <person name="Barker K.S."/>
            <person name="Lee R.E."/>
            <person name="Wei L."/>
            <person name="Homayouni R."/>
            <person name="Rogers P.D."/>
        </authorList>
    </citation>
    <scope>INDUCTION</scope>
</reference>
<reference key="6">
    <citation type="journal article" date="2012" name="Cell">
        <title>A recently evolved transcriptional network controls biofilm development in Candida albicans.</title>
        <authorList>
            <person name="Nobile C.J."/>
            <person name="Fox E.P."/>
            <person name="Nett J.E."/>
            <person name="Sorrells T.R."/>
            <person name="Mitrovich Q.M."/>
            <person name="Hernday A.D."/>
            <person name="Tuch B.B."/>
            <person name="Andes D.R."/>
            <person name="Johnson A.D."/>
        </authorList>
    </citation>
    <scope>INDUCTION</scope>
</reference>
<gene>
    <name evidence="8" type="primary">ERG26</name>
    <name type="ordered locus">orf19.2909</name>
    <name type="ORF">CAALFM_C406270CA</name>
</gene>
<organism>
    <name type="scientific">Candida albicans (strain SC5314 / ATCC MYA-2876)</name>
    <name type="common">Yeast</name>
    <dbReference type="NCBI Taxonomy" id="237561"/>
    <lineage>
        <taxon>Eukaryota</taxon>
        <taxon>Fungi</taxon>
        <taxon>Dikarya</taxon>
        <taxon>Ascomycota</taxon>
        <taxon>Saccharomycotina</taxon>
        <taxon>Pichiomycetes</taxon>
        <taxon>Debaryomycetaceae</taxon>
        <taxon>Candida/Lodderomyces clade</taxon>
        <taxon>Candida</taxon>
    </lineage>
</organism>
<dbReference type="EC" id="1.1.1.170" evidence="5"/>
<dbReference type="EMBL" id="CP017626">
    <property type="protein sequence ID" value="AOW29353.1"/>
    <property type="molecule type" value="Genomic_DNA"/>
</dbReference>
<dbReference type="RefSeq" id="XP_715564.1">
    <property type="nucleotide sequence ID" value="XM_710471.1"/>
</dbReference>
<dbReference type="SMR" id="Q5A1B0"/>
<dbReference type="FunCoup" id="Q5A1B0">
    <property type="interactions" value="426"/>
</dbReference>
<dbReference type="STRING" id="237561.Q5A1B0"/>
<dbReference type="EnsemblFungi" id="C4_06270C_A-T">
    <property type="protein sequence ID" value="C4_06270C_A-T-p1"/>
    <property type="gene ID" value="C4_06270C_A"/>
</dbReference>
<dbReference type="GeneID" id="3642803"/>
<dbReference type="KEGG" id="cal:CAALFM_C406270CA"/>
<dbReference type="CGD" id="CAL0000199131">
    <property type="gene designation" value="ERG26"/>
</dbReference>
<dbReference type="VEuPathDB" id="FungiDB:C4_06270C_A"/>
<dbReference type="eggNOG" id="KOG1430">
    <property type="taxonomic scope" value="Eukaryota"/>
</dbReference>
<dbReference type="HOGENOM" id="CLU_007383_6_8_1"/>
<dbReference type="InParanoid" id="Q5A1B0"/>
<dbReference type="OMA" id="STAHWFD"/>
<dbReference type="OrthoDB" id="10058185at2759"/>
<dbReference type="BRENDA" id="1.1.1.170">
    <property type="organism ID" value="1096"/>
</dbReference>
<dbReference type="UniPathway" id="UPA00770">
    <property type="reaction ID" value="UER00757"/>
</dbReference>
<dbReference type="Proteomes" id="UP000000559">
    <property type="component" value="Chromosome 4"/>
</dbReference>
<dbReference type="GO" id="GO:0005783">
    <property type="term" value="C:endoplasmic reticulum"/>
    <property type="evidence" value="ECO:0000318"/>
    <property type="project" value="GO_Central"/>
</dbReference>
<dbReference type="GO" id="GO:0005789">
    <property type="term" value="C:endoplasmic reticulum membrane"/>
    <property type="evidence" value="ECO:0007669"/>
    <property type="project" value="UniProtKB-SubCell"/>
</dbReference>
<dbReference type="GO" id="GO:0102175">
    <property type="term" value="F:3-beta-hydroxysteroid dehydrogenase (NAD+)/C4-decarboxylase activity"/>
    <property type="evidence" value="ECO:0007669"/>
    <property type="project" value="EnsemblFungi"/>
</dbReference>
<dbReference type="GO" id="GO:0000252">
    <property type="term" value="F:3-beta-hydroxysteroid dehydrogenase [NAD(P)+]/C4-decarboxylase activity"/>
    <property type="evidence" value="ECO:0000316"/>
    <property type="project" value="CGD"/>
</dbReference>
<dbReference type="GO" id="GO:0006696">
    <property type="term" value="P:ergosterol biosynthetic process"/>
    <property type="evidence" value="ECO:0000316"/>
    <property type="project" value="CGD"/>
</dbReference>
<dbReference type="CDD" id="cd09813">
    <property type="entry name" value="3b-HSD-NSDHL-like_SDR_e"/>
    <property type="match status" value="1"/>
</dbReference>
<dbReference type="FunFam" id="3.40.50.720:FF:000346">
    <property type="entry name" value="C-3 sterol dehydrogenase/C-4 decarboxylase"/>
    <property type="match status" value="1"/>
</dbReference>
<dbReference type="Gene3D" id="3.40.50.720">
    <property type="entry name" value="NAD(P)-binding Rossmann-like Domain"/>
    <property type="match status" value="1"/>
</dbReference>
<dbReference type="InterPro" id="IPR002225">
    <property type="entry name" value="3Beta_OHSteriod_DH/Estase"/>
</dbReference>
<dbReference type="InterPro" id="IPR036291">
    <property type="entry name" value="NAD(P)-bd_dom_sf"/>
</dbReference>
<dbReference type="PANTHER" id="PTHR43000">
    <property type="entry name" value="DTDP-D-GLUCOSE 4,6-DEHYDRATASE-RELATED"/>
    <property type="match status" value="1"/>
</dbReference>
<dbReference type="Pfam" id="PF01073">
    <property type="entry name" value="3Beta_HSD"/>
    <property type="match status" value="1"/>
</dbReference>
<dbReference type="SUPFAM" id="SSF51735">
    <property type="entry name" value="NAD(P)-binding Rossmann-fold domains"/>
    <property type="match status" value="1"/>
</dbReference>
<protein>
    <recommendedName>
        <fullName evidence="8">Sterol-4-alpha-carboxylate 3-dehydrogenase ERG26, decarboxylating</fullName>
        <ecNumber evidence="5">1.1.1.170</ecNumber>
    </recommendedName>
    <alternativeName>
        <fullName evidence="8">C-3 sterol dehydrogenase ERG26</fullName>
    </alternativeName>
    <alternativeName>
        <fullName evidence="8">C-4 decarboxylase ERG26</fullName>
    </alternativeName>
</protein>